<sequence length="527" mass="56928">MPHTVATPPPLLQVRGISKQFSGVVVLKSIDFTLQPGQVHALLGGNGAGKSTLMKIIAGILPPDTGVIEMNGQPCFNLTPAKAHQLGIYLVPQEPMLFANLSVQENILFRLPKHQADKKKMAQLLKNLGCHLDLSVSAGSLEVADQQLVEIMRGLIRDSHILILDEPTASLTPAETHRLFSQIRMLLQQGVGVVFISHKLPEIRQLADWVSVMRDGGIALSGATADFSTEDMIQAMTPEAQKGALTDSQKLWLELPGNRRAQSHAQSQQPVIHVHDLSGEGFAHISFHVQAGEILGLAGVVGAGRTELAETLYGLRPASTGNVILEEVNITAMKTANRLAAGLVYLPEDRQASGLYLDAPLSWNVCALAHDRQGLWTQPAQEAAVLERYRRALNIKFSHLEQPVRTLSGGNQQKLLIAKCLEANPLLLIIDEPTRGVDVSARSDIYQLIRSIAEQQVAIIFISSDLEEVVQMADRVLVMHQGEINGALSGAAMNVDTIMHMAFGEHRSASEPQGGTASSAENKGASC</sequence>
<protein>
    <recommendedName>
        <fullName evidence="1">Autoinducer 2 import ATP-binding protein LsrA</fullName>
        <shortName evidence="1">AI-2 import ATP-binding protein LsrA</shortName>
        <ecNumber evidence="1">7.6.2.13</ecNumber>
    </recommendedName>
</protein>
<feature type="chain" id="PRO_0000351308" description="Autoinducer 2 import ATP-binding protein LsrA">
    <location>
        <begin position="1"/>
        <end position="527"/>
    </location>
</feature>
<feature type="domain" description="ABC transporter 1" evidence="2">
    <location>
        <begin position="12"/>
        <end position="240"/>
    </location>
</feature>
<feature type="domain" description="ABC transporter 2" evidence="2">
    <location>
        <begin position="266"/>
        <end position="506"/>
    </location>
</feature>
<feature type="region of interest" description="Disordered" evidence="3">
    <location>
        <begin position="507"/>
        <end position="527"/>
    </location>
</feature>
<feature type="compositionally biased region" description="Polar residues" evidence="3">
    <location>
        <begin position="510"/>
        <end position="521"/>
    </location>
</feature>
<feature type="binding site" evidence="2">
    <location>
        <begin position="44"/>
        <end position="51"/>
    </location>
    <ligand>
        <name>ATP</name>
        <dbReference type="ChEBI" id="CHEBI:30616"/>
    </ligand>
</feature>
<accession>Q0WJP9</accession>
<accession>Q74PW5</accession>
<accession>Q8CZN0</accession>
<gene>
    <name type="primary">lsrA</name>
    <name type="ordered locus">YPO0412</name>
    <name type="ordered locus">y3769</name>
    <name type="ordered locus">YP_3769</name>
</gene>
<reference key="1">
    <citation type="journal article" date="2001" name="Nature">
        <title>Genome sequence of Yersinia pestis, the causative agent of plague.</title>
        <authorList>
            <person name="Parkhill J."/>
            <person name="Wren B.W."/>
            <person name="Thomson N.R."/>
            <person name="Titball R.W."/>
            <person name="Holden M.T.G."/>
            <person name="Prentice M.B."/>
            <person name="Sebaihia M."/>
            <person name="James K.D."/>
            <person name="Churcher C.M."/>
            <person name="Mungall K.L."/>
            <person name="Baker S."/>
            <person name="Basham D."/>
            <person name="Bentley S.D."/>
            <person name="Brooks K."/>
            <person name="Cerdeno-Tarraga A.-M."/>
            <person name="Chillingworth T."/>
            <person name="Cronin A."/>
            <person name="Davies R.M."/>
            <person name="Davis P."/>
            <person name="Dougan G."/>
            <person name="Feltwell T."/>
            <person name="Hamlin N."/>
            <person name="Holroyd S."/>
            <person name="Jagels K."/>
            <person name="Karlyshev A.V."/>
            <person name="Leather S."/>
            <person name="Moule S."/>
            <person name="Oyston P.C.F."/>
            <person name="Quail M.A."/>
            <person name="Rutherford K.M."/>
            <person name="Simmonds M."/>
            <person name="Skelton J."/>
            <person name="Stevens K."/>
            <person name="Whitehead S."/>
            <person name="Barrell B.G."/>
        </authorList>
    </citation>
    <scope>NUCLEOTIDE SEQUENCE [LARGE SCALE GENOMIC DNA]</scope>
    <source>
        <strain>CO-92 / Biovar Orientalis</strain>
    </source>
</reference>
<reference key="2">
    <citation type="journal article" date="2002" name="J. Bacteriol.">
        <title>Genome sequence of Yersinia pestis KIM.</title>
        <authorList>
            <person name="Deng W."/>
            <person name="Burland V."/>
            <person name="Plunkett G. III"/>
            <person name="Boutin A."/>
            <person name="Mayhew G.F."/>
            <person name="Liss P."/>
            <person name="Perna N.T."/>
            <person name="Rose D.J."/>
            <person name="Mau B."/>
            <person name="Zhou S."/>
            <person name="Schwartz D.C."/>
            <person name="Fetherston J.D."/>
            <person name="Lindler L.E."/>
            <person name="Brubaker R.R."/>
            <person name="Plano G.V."/>
            <person name="Straley S.C."/>
            <person name="McDonough K.A."/>
            <person name="Nilles M.L."/>
            <person name="Matson J.S."/>
            <person name="Blattner F.R."/>
            <person name="Perry R.D."/>
        </authorList>
    </citation>
    <scope>NUCLEOTIDE SEQUENCE [LARGE SCALE GENOMIC DNA]</scope>
    <source>
        <strain>KIM10+ / Biovar Mediaevalis</strain>
    </source>
</reference>
<reference key="3">
    <citation type="journal article" date="2004" name="DNA Res.">
        <title>Complete genome sequence of Yersinia pestis strain 91001, an isolate avirulent to humans.</title>
        <authorList>
            <person name="Song Y."/>
            <person name="Tong Z."/>
            <person name="Wang J."/>
            <person name="Wang L."/>
            <person name="Guo Z."/>
            <person name="Han Y."/>
            <person name="Zhang J."/>
            <person name="Pei D."/>
            <person name="Zhou D."/>
            <person name="Qin H."/>
            <person name="Pang X."/>
            <person name="Han Y."/>
            <person name="Zhai J."/>
            <person name="Li M."/>
            <person name="Cui B."/>
            <person name="Qi Z."/>
            <person name="Jin L."/>
            <person name="Dai R."/>
            <person name="Chen F."/>
            <person name="Li S."/>
            <person name="Ye C."/>
            <person name="Du Z."/>
            <person name="Lin W."/>
            <person name="Wang J."/>
            <person name="Yu J."/>
            <person name="Yang H."/>
            <person name="Wang J."/>
            <person name="Huang P."/>
            <person name="Yang R."/>
        </authorList>
    </citation>
    <scope>NUCLEOTIDE SEQUENCE [LARGE SCALE GENOMIC DNA]</scope>
    <source>
        <strain>91001 / Biovar Mediaevalis</strain>
    </source>
</reference>
<comment type="function">
    <text evidence="1">Part of the ABC transporter complex LsrABCD involved in autoinducer 2 (AI-2) import. Responsible for energy coupling to the transport system.</text>
</comment>
<comment type="catalytic activity">
    <reaction evidence="1">
        <text>ATP + H2O + (2R,4S)-2-methyl-2,3,3,4-tetrahydroxytetrahydrofuran-[AI-2-binding protein]Side 1 = ADP + phosphate + (2R,4S)-2-methyl-2,3,3,4-tetrahydroxytetrahydrofuranSide 2 + [AI-2-binding protein]Side 1.</text>
        <dbReference type="EC" id="7.6.2.13"/>
    </reaction>
</comment>
<comment type="subunit">
    <text evidence="1">The complex is composed of two ATP-binding proteins (LsrA), two transmembrane proteins (LsrC and LsrD) and a solute-binding protein (LsrB).</text>
</comment>
<comment type="subcellular location">
    <subcellularLocation>
        <location evidence="1">Cell inner membrane</location>
        <topology evidence="1">Peripheral membrane protein</topology>
    </subcellularLocation>
</comment>
<comment type="similarity">
    <text evidence="4">Belongs to the ABC transporter superfamily. AI-2 autoinducer porter (TC 3.A.1.2.8) family.</text>
</comment>
<comment type="sequence caution" evidence="4">
    <conflict type="erroneous initiation">
        <sequence resource="EMBL-CDS" id="AAM87314"/>
    </conflict>
</comment>
<comment type="sequence caution" evidence="4">
    <conflict type="erroneous initiation">
        <sequence resource="EMBL-CDS" id="AAS63917"/>
    </conflict>
</comment>
<evidence type="ECO:0000250" key="1">
    <source>
        <dbReference type="UniProtKB" id="P77257"/>
    </source>
</evidence>
<evidence type="ECO:0000255" key="2">
    <source>
        <dbReference type="PROSITE-ProRule" id="PRU00434"/>
    </source>
</evidence>
<evidence type="ECO:0000256" key="3">
    <source>
        <dbReference type="SAM" id="MobiDB-lite"/>
    </source>
</evidence>
<evidence type="ECO:0000305" key="4"/>
<keyword id="KW-0067">ATP-binding</keyword>
<keyword id="KW-0997">Cell inner membrane</keyword>
<keyword id="KW-1003">Cell membrane</keyword>
<keyword id="KW-0472">Membrane</keyword>
<keyword id="KW-0547">Nucleotide-binding</keyword>
<keyword id="KW-1185">Reference proteome</keyword>
<keyword id="KW-0677">Repeat</keyword>
<keyword id="KW-1278">Translocase</keyword>
<keyword id="KW-0813">Transport</keyword>
<name>LSRA_YERPE</name>
<organism>
    <name type="scientific">Yersinia pestis</name>
    <dbReference type="NCBI Taxonomy" id="632"/>
    <lineage>
        <taxon>Bacteria</taxon>
        <taxon>Pseudomonadati</taxon>
        <taxon>Pseudomonadota</taxon>
        <taxon>Gammaproteobacteria</taxon>
        <taxon>Enterobacterales</taxon>
        <taxon>Yersiniaceae</taxon>
        <taxon>Yersinia</taxon>
    </lineage>
</organism>
<dbReference type="EC" id="7.6.2.13" evidence="1"/>
<dbReference type="EMBL" id="AL590842">
    <property type="protein sequence ID" value="CAL19093.1"/>
    <property type="molecule type" value="Genomic_DNA"/>
</dbReference>
<dbReference type="EMBL" id="AE009952">
    <property type="protein sequence ID" value="AAM87314.1"/>
    <property type="status" value="ALT_INIT"/>
    <property type="molecule type" value="Genomic_DNA"/>
</dbReference>
<dbReference type="EMBL" id="AE017042">
    <property type="protein sequence ID" value="AAS63917.1"/>
    <property type="status" value="ALT_INIT"/>
    <property type="molecule type" value="Genomic_DNA"/>
</dbReference>
<dbReference type="PIR" id="AC0051">
    <property type="entry name" value="AC0051"/>
</dbReference>
<dbReference type="RefSeq" id="WP_002209192.1">
    <property type="nucleotide sequence ID" value="NZ_WUCM01000002.1"/>
</dbReference>
<dbReference type="RefSeq" id="YP_002345489.1">
    <property type="nucleotide sequence ID" value="NC_003143.1"/>
</dbReference>
<dbReference type="SMR" id="Q0WJP9"/>
<dbReference type="IntAct" id="Q0WJP9">
    <property type="interactions" value="2"/>
</dbReference>
<dbReference type="STRING" id="214092.YPO0412"/>
<dbReference type="PaxDb" id="214092-YPO0412"/>
<dbReference type="DNASU" id="1148716"/>
<dbReference type="EnsemblBacteria" id="AAS63917">
    <property type="protein sequence ID" value="AAS63917"/>
    <property type="gene ID" value="YP_3769"/>
</dbReference>
<dbReference type="GeneID" id="57974198"/>
<dbReference type="KEGG" id="ype:YPO0412"/>
<dbReference type="KEGG" id="ypk:y3769"/>
<dbReference type="KEGG" id="ypm:YP_3769"/>
<dbReference type="PATRIC" id="fig|214092.21.peg.652"/>
<dbReference type="eggNOG" id="COG1129">
    <property type="taxonomic scope" value="Bacteria"/>
</dbReference>
<dbReference type="HOGENOM" id="CLU_000604_92_1_6"/>
<dbReference type="OMA" id="PQDRHKH"/>
<dbReference type="OrthoDB" id="9805029at2"/>
<dbReference type="Proteomes" id="UP000000815">
    <property type="component" value="Chromosome"/>
</dbReference>
<dbReference type="Proteomes" id="UP000001019">
    <property type="component" value="Chromosome"/>
</dbReference>
<dbReference type="Proteomes" id="UP000002490">
    <property type="component" value="Chromosome"/>
</dbReference>
<dbReference type="GO" id="GO:0005886">
    <property type="term" value="C:plasma membrane"/>
    <property type="evidence" value="ECO:0007669"/>
    <property type="project" value="UniProtKB-SubCell"/>
</dbReference>
<dbReference type="GO" id="GO:0005524">
    <property type="term" value="F:ATP binding"/>
    <property type="evidence" value="ECO:0007669"/>
    <property type="project" value="UniProtKB-KW"/>
</dbReference>
<dbReference type="GO" id="GO:0016887">
    <property type="term" value="F:ATP hydrolysis activity"/>
    <property type="evidence" value="ECO:0007669"/>
    <property type="project" value="InterPro"/>
</dbReference>
<dbReference type="CDD" id="cd03216">
    <property type="entry name" value="ABC_Carb_Monos_I"/>
    <property type="match status" value="1"/>
</dbReference>
<dbReference type="CDD" id="cd03215">
    <property type="entry name" value="ABC_Carb_Monos_II"/>
    <property type="match status" value="1"/>
</dbReference>
<dbReference type="Gene3D" id="3.40.50.300">
    <property type="entry name" value="P-loop containing nucleotide triphosphate hydrolases"/>
    <property type="match status" value="2"/>
</dbReference>
<dbReference type="InterPro" id="IPR003593">
    <property type="entry name" value="AAA+_ATPase"/>
</dbReference>
<dbReference type="InterPro" id="IPR050107">
    <property type="entry name" value="ABC_carbohydrate_import_ATPase"/>
</dbReference>
<dbReference type="InterPro" id="IPR003439">
    <property type="entry name" value="ABC_transporter-like_ATP-bd"/>
</dbReference>
<dbReference type="InterPro" id="IPR017871">
    <property type="entry name" value="ABC_transporter-like_CS"/>
</dbReference>
<dbReference type="InterPro" id="IPR027417">
    <property type="entry name" value="P-loop_NTPase"/>
</dbReference>
<dbReference type="NCBIfam" id="NF011967">
    <property type="entry name" value="PRK15439.1"/>
    <property type="match status" value="1"/>
</dbReference>
<dbReference type="PANTHER" id="PTHR43790:SF2">
    <property type="entry name" value="AUTOINDUCER 2 IMPORT ATP-BINDING PROTEIN LSRA"/>
    <property type="match status" value="1"/>
</dbReference>
<dbReference type="PANTHER" id="PTHR43790">
    <property type="entry name" value="CARBOHYDRATE TRANSPORT ATP-BINDING PROTEIN MG119-RELATED"/>
    <property type="match status" value="1"/>
</dbReference>
<dbReference type="Pfam" id="PF00005">
    <property type="entry name" value="ABC_tran"/>
    <property type="match status" value="2"/>
</dbReference>
<dbReference type="SMART" id="SM00382">
    <property type="entry name" value="AAA"/>
    <property type="match status" value="2"/>
</dbReference>
<dbReference type="SUPFAM" id="SSF52540">
    <property type="entry name" value="P-loop containing nucleoside triphosphate hydrolases"/>
    <property type="match status" value="2"/>
</dbReference>
<dbReference type="PROSITE" id="PS00211">
    <property type="entry name" value="ABC_TRANSPORTER_1"/>
    <property type="match status" value="1"/>
</dbReference>
<dbReference type="PROSITE" id="PS50893">
    <property type="entry name" value="ABC_TRANSPORTER_2"/>
    <property type="match status" value="2"/>
</dbReference>
<proteinExistence type="inferred from homology"/>